<name>CFI2_ARATH</name>
<feature type="chain" id="PRO_0000300831" description="Chalcone--flavanone isomerase 2">
    <location>
        <begin position="1"/>
        <end position="223"/>
    </location>
</feature>
<feature type="binding site" evidence="1">
    <location>
        <position position="41"/>
    </location>
    <ligand>
        <name>substrate</name>
    </ligand>
</feature>
<feature type="binding site" evidence="1">
    <location>
        <position position="106"/>
    </location>
    <ligand>
        <name>substrate</name>
    </ligand>
</feature>
<feature type="binding site" evidence="1">
    <location>
        <position position="183"/>
    </location>
    <ligand>
        <name>substrate</name>
    </ligand>
</feature>
<feature type="site" description="Important for catalytic activity" evidence="1">
    <location>
        <position position="99"/>
    </location>
</feature>
<feature type="splice variant" id="VSP_035545" description="In isoform 2." evidence="2">
    <location>
        <begin position="1"/>
        <end position="49"/>
    </location>
</feature>
<organism>
    <name type="scientific">Arabidopsis thaliana</name>
    <name type="common">Mouse-ear cress</name>
    <dbReference type="NCBI Taxonomy" id="3702"/>
    <lineage>
        <taxon>Eukaryota</taxon>
        <taxon>Viridiplantae</taxon>
        <taxon>Streptophyta</taxon>
        <taxon>Embryophyta</taxon>
        <taxon>Tracheophyta</taxon>
        <taxon>Spermatophyta</taxon>
        <taxon>Magnoliopsida</taxon>
        <taxon>eudicotyledons</taxon>
        <taxon>Gunneridae</taxon>
        <taxon>Pentapetalae</taxon>
        <taxon>rosids</taxon>
        <taxon>malvids</taxon>
        <taxon>Brassicales</taxon>
        <taxon>Brassicaceae</taxon>
        <taxon>Camelineae</taxon>
        <taxon>Arabidopsis</taxon>
    </lineage>
</organism>
<accession>Q9FKW3</accession>
<accession>Q1PDF7</accession>
<dbReference type="EC" id="5.5.1.6"/>
<dbReference type="EMBL" id="AB011474">
    <property type="protein sequence ID" value="BAB10427.1"/>
    <property type="molecule type" value="Genomic_DNA"/>
</dbReference>
<dbReference type="EMBL" id="CP002688">
    <property type="protein sequence ID" value="AED98184.1"/>
    <property type="molecule type" value="Genomic_DNA"/>
</dbReference>
<dbReference type="EMBL" id="DQ447111">
    <property type="protein sequence ID" value="ABE66278.1"/>
    <property type="molecule type" value="mRNA"/>
</dbReference>
<dbReference type="RefSeq" id="NP_201423.2">
    <molecule id="Q9FKW3-2"/>
    <property type="nucleotide sequence ID" value="NM_126020.2"/>
</dbReference>
<dbReference type="SMR" id="Q9FKW3"/>
<dbReference type="FunCoup" id="Q9FKW3">
    <property type="interactions" value="24"/>
</dbReference>
<dbReference type="STRING" id="3702.Q9FKW3"/>
<dbReference type="PaxDb" id="3702-AT5G66230.2"/>
<dbReference type="PeptideAtlas" id="Q9FKW3"/>
<dbReference type="EnsemblPlants" id="AT5G66220.1">
    <molecule id="Q9FKW3-2"/>
    <property type="protein sequence ID" value="AT5G66220.1"/>
    <property type="gene ID" value="AT5G66220"/>
</dbReference>
<dbReference type="GeneID" id="836754"/>
<dbReference type="Gramene" id="AT5G66220.1">
    <molecule id="Q9FKW3-2"/>
    <property type="protein sequence ID" value="AT5G66220.1"/>
    <property type="gene ID" value="AT5G66220"/>
</dbReference>
<dbReference type="KEGG" id="ath:AT5G66220"/>
<dbReference type="Araport" id="AT5G66220"/>
<dbReference type="TAIR" id="AT5G66220"/>
<dbReference type="eggNOG" id="ENOG502QR7K">
    <property type="taxonomic scope" value="Eukaryota"/>
</dbReference>
<dbReference type="InParanoid" id="Q9FKW3"/>
<dbReference type="OMA" id="FNDCGVD"/>
<dbReference type="PhylomeDB" id="Q9FKW3"/>
<dbReference type="BioCyc" id="ARA:AT5G66220-MONOMER"/>
<dbReference type="UniPathway" id="UPA00154"/>
<dbReference type="PRO" id="PR:Q9FKW3"/>
<dbReference type="Proteomes" id="UP000006548">
    <property type="component" value="Chromosome 5"/>
</dbReference>
<dbReference type="ExpressionAtlas" id="Q9FKW3">
    <property type="expression patterns" value="baseline and differential"/>
</dbReference>
<dbReference type="GO" id="GO:0045430">
    <property type="term" value="F:chalcone isomerase activity"/>
    <property type="evidence" value="ECO:0007669"/>
    <property type="project" value="UniProtKB-EC"/>
</dbReference>
<dbReference type="GO" id="GO:0009813">
    <property type="term" value="P:flavonoid biosynthetic process"/>
    <property type="evidence" value="ECO:0007669"/>
    <property type="project" value="UniProtKB-UniPathway"/>
</dbReference>
<dbReference type="Gene3D" id="1.10.890.20">
    <property type="match status" value="1"/>
</dbReference>
<dbReference type="Gene3D" id="3.50.70.10">
    <property type="match status" value="1"/>
</dbReference>
<dbReference type="InterPro" id="IPR044164">
    <property type="entry name" value="CFI"/>
</dbReference>
<dbReference type="InterPro" id="IPR016087">
    <property type="entry name" value="Chalcone_isomerase"/>
</dbReference>
<dbReference type="InterPro" id="IPR016088">
    <property type="entry name" value="Chalcone_isomerase_3-sand"/>
</dbReference>
<dbReference type="InterPro" id="IPR016089">
    <property type="entry name" value="Chalcone_isomerase_bundle_sf"/>
</dbReference>
<dbReference type="InterPro" id="IPR036298">
    <property type="entry name" value="Chalcone_isomerase_sf"/>
</dbReference>
<dbReference type="PANTHER" id="PTHR28039:SF8">
    <property type="entry name" value="CHALCONE--FLAVANONE ISOMERASE 1-RELATED"/>
    <property type="match status" value="1"/>
</dbReference>
<dbReference type="PANTHER" id="PTHR28039">
    <property type="entry name" value="CHALCONE--FLAVONONE ISOMERASE 1-RELATED"/>
    <property type="match status" value="1"/>
</dbReference>
<dbReference type="Pfam" id="PF02431">
    <property type="entry name" value="Chalcone"/>
    <property type="match status" value="1"/>
</dbReference>
<dbReference type="SUPFAM" id="SSF54626">
    <property type="entry name" value="Chalcone isomerase"/>
    <property type="match status" value="1"/>
</dbReference>
<proteinExistence type="evidence at transcript level"/>
<reference key="1">
    <citation type="journal article" date="1998" name="DNA Res.">
        <title>Structural analysis of Arabidopsis thaliana chromosome 5. V. Sequence features of the regions of 1,381,565 bp covered by twenty one physically assigned P1 and TAC clones.</title>
        <authorList>
            <person name="Kaneko T."/>
            <person name="Kotani H."/>
            <person name="Nakamura Y."/>
            <person name="Sato S."/>
            <person name="Asamizu E."/>
            <person name="Miyajima N."/>
            <person name="Tabata S."/>
        </authorList>
    </citation>
    <scope>NUCLEOTIDE SEQUENCE [LARGE SCALE GENOMIC DNA]</scope>
    <source>
        <strain>cv. Columbia</strain>
    </source>
</reference>
<reference key="2">
    <citation type="journal article" date="2017" name="Plant J.">
        <title>Araport11: a complete reannotation of the Arabidopsis thaliana reference genome.</title>
        <authorList>
            <person name="Cheng C.Y."/>
            <person name="Krishnakumar V."/>
            <person name="Chan A.P."/>
            <person name="Thibaud-Nissen F."/>
            <person name="Schobel S."/>
            <person name="Town C.D."/>
        </authorList>
    </citation>
    <scope>GENOME REANNOTATION</scope>
    <source>
        <strain>cv. Columbia</strain>
    </source>
</reference>
<reference key="3">
    <citation type="journal article" date="2006" name="Plant Biotechnol. J.">
        <title>Simultaneous high-throughput recombinational cloning of open reading frames in closed and open configurations.</title>
        <authorList>
            <person name="Underwood B.A."/>
            <person name="Vanderhaeghen R."/>
            <person name="Whitford R."/>
            <person name="Town C.D."/>
            <person name="Hilson P."/>
        </authorList>
    </citation>
    <scope>NUCLEOTIDE SEQUENCE [LARGE SCALE MRNA] (ISOFORM 2)</scope>
    <source>
        <strain>cv. Columbia</strain>
    </source>
</reference>
<protein>
    <recommendedName>
        <fullName>Chalcone--flavanone isomerase 2</fullName>
        <shortName>Chalcone isomerase 2</shortName>
        <ecNumber>5.5.1.6</ecNumber>
    </recommendedName>
</protein>
<comment type="function">
    <text evidence="1">Catalyzes the intramolecular cyclization of bicyclic chalcones into tricyclic (S)-flavanones. Responsible for the isomerization of 4,2',4',6'-tetrahydroxychalcone (also termed chalcone) into naringenin (By similarity).</text>
</comment>
<comment type="catalytic activity">
    <reaction>
        <text>a chalcone = a flavanone.</text>
        <dbReference type="EC" id="5.5.1.6"/>
    </reaction>
</comment>
<comment type="pathway">
    <text>Secondary metabolite biosynthesis; flavonoid biosynthesis.</text>
</comment>
<comment type="alternative products">
    <event type="alternative splicing"/>
    <isoform>
        <id>Q9FKW3-1</id>
        <name>1</name>
        <sequence type="displayed"/>
    </isoform>
    <isoform>
        <id>Q9FKW3-2</id>
        <name>2</name>
        <sequence type="described" ref="VSP_035545"/>
    </isoform>
</comment>
<comment type="miscellaneous">
    <text>Part of the biosynthetic pathway for all classes of flavonoids, a large class of secondary plant metabolites, many of which are brightly colored.</text>
</comment>
<comment type="miscellaneous">
    <molecule>Isoform 2</molecule>
    <text evidence="3">May be due to a competing acceptor splice site.</text>
</comment>
<comment type="similarity">
    <text evidence="3">Belongs to the chalcone isomerase family.</text>
</comment>
<keyword id="KW-0025">Alternative splicing</keyword>
<keyword id="KW-0284">Flavonoid biosynthesis</keyword>
<keyword id="KW-0413">Isomerase</keyword>
<keyword id="KW-1185">Reference proteome</keyword>
<evidence type="ECO:0000250" key="1"/>
<evidence type="ECO:0000303" key="2">
    <source>
    </source>
</evidence>
<evidence type="ECO:0000305" key="3"/>
<gene>
    <name type="primary">CHI2</name>
    <name type="ordered locus">At5g66220</name>
    <name type="ORF">K2A18.30</name>
</gene>
<sequence length="223" mass="24465">MPLPSVTPLHVDAFTFPPAVESPASHKRLFLGGAGKFVIVTVIGVYLEAMALPSISAKWKGKNAKELTESVPFFRQLVTGEFEKLARVTMKKRLTGIQYSEKVVENCEEIMKASGKYTRSEAKAIDQFLMVFKNQDFPPGSSIIFAICPKGSLTIAFSKEERVPKTGKAVIKNKLLGEAVLESMIGKNGVSPATRKSLAERLSKLMNKKDPYNEANVNVATKN</sequence>